<feature type="chain" id="PRO_0000112408" description="N-acetyl-gamma-glutamyl-phosphate reductase">
    <location>
        <begin position="1"/>
        <end position="346"/>
    </location>
</feature>
<feature type="active site" evidence="1">
    <location>
        <position position="149"/>
    </location>
</feature>
<gene>
    <name evidence="1" type="primary">argC</name>
    <name type="ordered locus">GSU2874</name>
</gene>
<keyword id="KW-0028">Amino-acid biosynthesis</keyword>
<keyword id="KW-0055">Arginine biosynthesis</keyword>
<keyword id="KW-0963">Cytoplasm</keyword>
<keyword id="KW-0521">NADP</keyword>
<keyword id="KW-0560">Oxidoreductase</keyword>
<keyword id="KW-1185">Reference proteome</keyword>
<accession>Q748X6</accession>
<dbReference type="EC" id="1.2.1.38" evidence="1"/>
<dbReference type="EMBL" id="AE017180">
    <property type="protein sequence ID" value="AAR36266.1"/>
    <property type="molecule type" value="Genomic_DNA"/>
</dbReference>
<dbReference type="RefSeq" id="NP_953916.1">
    <property type="nucleotide sequence ID" value="NC_002939.5"/>
</dbReference>
<dbReference type="RefSeq" id="WP_010943503.1">
    <property type="nucleotide sequence ID" value="NC_002939.5"/>
</dbReference>
<dbReference type="SMR" id="Q748X6"/>
<dbReference type="FunCoup" id="Q748X6">
    <property type="interactions" value="344"/>
</dbReference>
<dbReference type="STRING" id="243231.GSU2874"/>
<dbReference type="EnsemblBacteria" id="AAR36266">
    <property type="protein sequence ID" value="AAR36266"/>
    <property type="gene ID" value="GSU2874"/>
</dbReference>
<dbReference type="KEGG" id="gsu:GSU2874"/>
<dbReference type="PATRIC" id="fig|243231.5.peg.2902"/>
<dbReference type="eggNOG" id="COG0002">
    <property type="taxonomic scope" value="Bacteria"/>
</dbReference>
<dbReference type="HOGENOM" id="CLU_006384_0_1_7"/>
<dbReference type="InParanoid" id="Q748X6"/>
<dbReference type="OrthoDB" id="9801289at2"/>
<dbReference type="UniPathway" id="UPA00068">
    <property type="reaction ID" value="UER00108"/>
</dbReference>
<dbReference type="Proteomes" id="UP000000577">
    <property type="component" value="Chromosome"/>
</dbReference>
<dbReference type="GO" id="GO:0005737">
    <property type="term" value="C:cytoplasm"/>
    <property type="evidence" value="ECO:0007669"/>
    <property type="project" value="UniProtKB-SubCell"/>
</dbReference>
<dbReference type="GO" id="GO:0003942">
    <property type="term" value="F:N-acetyl-gamma-glutamyl-phosphate reductase activity"/>
    <property type="evidence" value="ECO:0007669"/>
    <property type="project" value="UniProtKB-UniRule"/>
</dbReference>
<dbReference type="GO" id="GO:0051287">
    <property type="term" value="F:NAD binding"/>
    <property type="evidence" value="ECO:0007669"/>
    <property type="project" value="InterPro"/>
</dbReference>
<dbReference type="GO" id="GO:0070401">
    <property type="term" value="F:NADP+ binding"/>
    <property type="evidence" value="ECO:0007669"/>
    <property type="project" value="InterPro"/>
</dbReference>
<dbReference type="GO" id="GO:0006526">
    <property type="term" value="P:L-arginine biosynthetic process"/>
    <property type="evidence" value="ECO:0007669"/>
    <property type="project" value="UniProtKB-UniRule"/>
</dbReference>
<dbReference type="CDD" id="cd23934">
    <property type="entry name" value="AGPR_1_C"/>
    <property type="match status" value="1"/>
</dbReference>
<dbReference type="CDD" id="cd17895">
    <property type="entry name" value="AGPR_1_N"/>
    <property type="match status" value="1"/>
</dbReference>
<dbReference type="FunFam" id="3.30.360.10:FF:000014">
    <property type="entry name" value="N-acetyl-gamma-glutamyl-phosphate reductase"/>
    <property type="match status" value="1"/>
</dbReference>
<dbReference type="Gene3D" id="3.30.360.10">
    <property type="entry name" value="Dihydrodipicolinate Reductase, domain 2"/>
    <property type="match status" value="1"/>
</dbReference>
<dbReference type="Gene3D" id="3.40.50.720">
    <property type="entry name" value="NAD(P)-binding Rossmann-like Domain"/>
    <property type="match status" value="1"/>
</dbReference>
<dbReference type="HAMAP" id="MF_00150">
    <property type="entry name" value="ArgC_type1"/>
    <property type="match status" value="1"/>
</dbReference>
<dbReference type="InterPro" id="IPR023013">
    <property type="entry name" value="AGPR_AS"/>
</dbReference>
<dbReference type="InterPro" id="IPR000706">
    <property type="entry name" value="AGPR_type-1"/>
</dbReference>
<dbReference type="InterPro" id="IPR036291">
    <property type="entry name" value="NAD(P)-bd_dom_sf"/>
</dbReference>
<dbReference type="InterPro" id="IPR050085">
    <property type="entry name" value="NAGSA_dehydrogenase"/>
</dbReference>
<dbReference type="InterPro" id="IPR000534">
    <property type="entry name" value="Semialdehyde_DH_NAD-bd"/>
</dbReference>
<dbReference type="NCBIfam" id="TIGR01850">
    <property type="entry name" value="argC"/>
    <property type="match status" value="1"/>
</dbReference>
<dbReference type="PANTHER" id="PTHR32338:SF10">
    <property type="entry name" value="N-ACETYL-GAMMA-GLUTAMYL-PHOSPHATE REDUCTASE, CHLOROPLASTIC-RELATED"/>
    <property type="match status" value="1"/>
</dbReference>
<dbReference type="PANTHER" id="PTHR32338">
    <property type="entry name" value="N-ACETYL-GAMMA-GLUTAMYL-PHOSPHATE REDUCTASE, CHLOROPLASTIC-RELATED-RELATED"/>
    <property type="match status" value="1"/>
</dbReference>
<dbReference type="Pfam" id="PF01118">
    <property type="entry name" value="Semialdhyde_dh"/>
    <property type="match status" value="1"/>
</dbReference>
<dbReference type="Pfam" id="PF22698">
    <property type="entry name" value="Semialdhyde_dhC_1"/>
    <property type="match status" value="1"/>
</dbReference>
<dbReference type="SMART" id="SM00859">
    <property type="entry name" value="Semialdhyde_dh"/>
    <property type="match status" value="1"/>
</dbReference>
<dbReference type="SUPFAM" id="SSF55347">
    <property type="entry name" value="Glyceraldehyde-3-phosphate dehydrogenase-like, C-terminal domain"/>
    <property type="match status" value="1"/>
</dbReference>
<dbReference type="SUPFAM" id="SSF51735">
    <property type="entry name" value="NAD(P)-binding Rossmann-fold domains"/>
    <property type="match status" value="1"/>
</dbReference>
<dbReference type="PROSITE" id="PS01224">
    <property type="entry name" value="ARGC"/>
    <property type="match status" value="1"/>
</dbReference>
<comment type="function">
    <text evidence="1">Catalyzes the NADPH-dependent reduction of N-acetyl-5-glutamyl phosphate to yield N-acetyl-L-glutamate 5-semialdehyde.</text>
</comment>
<comment type="catalytic activity">
    <reaction evidence="1">
        <text>N-acetyl-L-glutamate 5-semialdehyde + phosphate + NADP(+) = N-acetyl-L-glutamyl 5-phosphate + NADPH + H(+)</text>
        <dbReference type="Rhea" id="RHEA:21588"/>
        <dbReference type="ChEBI" id="CHEBI:15378"/>
        <dbReference type="ChEBI" id="CHEBI:29123"/>
        <dbReference type="ChEBI" id="CHEBI:43474"/>
        <dbReference type="ChEBI" id="CHEBI:57783"/>
        <dbReference type="ChEBI" id="CHEBI:57936"/>
        <dbReference type="ChEBI" id="CHEBI:58349"/>
        <dbReference type="EC" id="1.2.1.38"/>
    </reaction>
</comment>
<comment type="pathway">
    <text evidence="1">Amino-acid biosynthesis; L-arginine biosynthesis; N(2)-acetyl-L-ornithine from L-glutamate: step 3/4.</text>
</comment>
<comment type="subcellular location">
    <subcellularLocation>
        <location evidence="1">Cytoplasm</location>
    </subcellularLocation>
</comment>
<comment type="similarity">
    <text evidence="1">Belongs to the NAGSA dehydrogenase family. Type 1 subfamily.</text>
</comment>
<reference key="1">
    <citation type="journal article" date="2003" name="Science">
        <title>Genome of Geobacter sulfurreducens: metal reduction in subsurface environments.</title>
        <authorList>
            <person name="Methe B.A."/>
            <person name="Nelson K.E."/>
            <person name="Eisen J.A."/>
            <person name="Paulsen I.T."/>
            <person name="Nelson W.C."/>
            <person name="Heidelberg J.F."/>
            <person name="Wu D."/>
            <person name="Wu M."/>
            <person name="Ward N.L."/>
            <person name="Beanan M.J."/>
            <person name="Dodson R.J."/>
            <person name="Madupu R."/>
            <person name="Brinkac L.M."/>
            <person name="Daugherty S.C."/>
            <person name="DeBoy R.T."/>
            <person name="Durkin A.S."/>
            <person name="Gwinn M.L."/>
            <person name="Kolonay J.F."/>
            <person name="Sullivan S.A."/>
            <person name="Haft D.H."/>
            <person name="Selengut J."/>
            <person name="Davidsen T.M."/>
            <person name="Zafar N."/>
            <person name="White O."/>
            <person name="Tran B."/>
            <person name="Romero C."/>
            <person name="Forberger H.A."/>
            <person name="Weidman J.F."/>
            <person name="Khouri H.M."/>
            <person name="Feldblyum T.V."/>
            <person name="Utterback T.R."/>
            <person name="Van Aken S.E."/>
            <person name="Lovley D.R."/>
            <person name="Fraser C.M."/>
        </authorList>
    </citation>
    <scope>NUCLEOTIDE SEQUENCE [LARGE SCALE GENOMIC DNA]</scope>
    <source>
        <strain>ATCC 51573 / DSM 12127 / PCA</strain>
    </source>
</reference>
<organism>
    <name type="scientific">Geobacter sulfurreducens (strain ATCC 51573 / DSM 12127 / PCA)</name>
    <dbReference type="NCBI Taxonomy" id="243231"/>
    <lineage>
        <taxon>Bacteria</taxon>
        <taxon>Pseudomonadati</taxon>
        <taxon>Thermodesulfobacteriota</taxon>
        <taxon>Desulfuromonadia</taxon>
        <taxon>Geobacterales</taxon>
        <taxon>Geobacteraceae</taxon>
        <taxon>Geobacter</taxon>
    </lineage>
</organism>
<name>ARGC_GEOSL</name>
<proteinExistence type="inferred from homology"/>
<evidence type="ECO:0000255" key="1">
    <source>
        <dbReference type="HAMAP-Rule" id="MF_00150"/>
    </source>
</evidence>
<protein>
    <recommendedName>
        <fullName evidence="1">N-acetyl-gamma-glutamyl-phosphate reductase</fullName>
        <shortName evidence="1">AGPR</shortName>
        <ecNumber evidence="1">1.2.1.38</ecNumber>
    </recommendedName>
    <alternativeName>
        <fullName evidence="1">N-acetyl-glutamate semialdehyde dehydrogenase</fullName>
        <shortName evidence="1">NAGSA dehydrogenase</shortName>
    </alternativeName>
</protein>
<sequence length="346" mass="36961">MLKVAVVGASGYTGVELLRILHCHPEVAVTCITSEQSAGKPVSDLFPSLRGRYAQVLENLEPIRVAEKADIIFTALPHKAAMEVVPTFLKLGKRVIDLSADYRFNDAATYEQWYEPHMNPHLLPKAVYGLPEVRRAAVKGAKLVANPGCYPTSVILGLQPLLKHKLIETAGIISDSASGVSGAGRGAKVDNLYCEVNEGFKAYGVGGVHRHTPEMEQELSLLADERITITFTPHLAPMDRGILSTIYGRLLTPATTAELAGLYAEFYGGEPFVRVLPAGGVPSTAHVRGSNFCDIGVVVDQRTGRVIVVSAIDNLVKGASGQAVQNMNIMCGLPEGLGLEGLALVP</sequence>